<accession>B5YSI4</accession>
<evidence type="ECO:0000255" key="1">
    <source>
        <dbReference type="HAMAP-Rule" id="MF_00617"/>
    </source>
</evidence>
<reference key="1">
    <citation type="journal article" date="2011" name="Proc. Natl. Acad. Sci. U.S.A.">
        <title>Genomic anatomy of Escherichia coli O157:H7 outbreaks.</title>
        <authorList>
            <person name="Eppinger M."/>
            <person name="Mammel M.K."/>
            <person name="Leclerc J.E."/>
            <person name="Ravel J."/>
            <person name="Cebula T.A."/>
        </authorList>
    </citation>
    <scope>NUCLEOTIDE SEQUENCE [LARGE SCALE GENOMIC DNA]</scope>
    <source>
        <strain>EC4115 / EHEC</strain>
    </source>
</reference>
<sequence>MFSIQQPLLVFSDLDGTLLDSHSYDWQPAAPWLSRLREANVPVILCSSKTSAEMLYLQKMLGLQGLPLIAENGAVIQLAEQWQEIDGFPRIISGISHGEISQVLNTLREKEHFKFTTFDDVDDATIAEWTGLSRSQAALTQLHEASVTLIWRDSDERMAQFTARLNELGLQFMQGARFWHVLDASAGKDQAANWIIATYQQLSGKRPTTLGLGDGPNDAPLLEVMDYAVIVKGLNREGVHLHDEDPARVWRTQREGPEGWREGLDHFFSAR</sequence>
<dbReference type="EC" id="3.1.3.70" evidence="1"/>
<dbReference type="EMBL" id="CP001164">
    <property type="protein sequence ID" value="ACI36790.1"/>
    <property type="molecule type" value="Genomic_DNA"/>
</dbReference>
<dbReference type="RefSeq" id="WP_000491488.1">
    <property type="nucleotide sequence ID" value="NC_011353.1"/>
</dbReference>
<dbReference type="SMR" id="B5YSI4"/>
<dbReference type="KEGG" id="ecf:ECH74115_2733"/>
<dbReference type="HOGENOM" id="CLU_063016_1_0_6"/>
<dbReference type="GO" id="GO:0005829">
    <property type="term" value="C:cytosol"/>
    <property type="evidence" value="ECO:0007669"/>
    <property type="project" value="TreeGrafter"/>
</dbReference>
<dbReference type="GO" id="GO:0000287">
    <property type="term" value="F:magnesium ion binding"/>
    <property type="evidence" value="ECO:0007669"/>
    <property type="project" value="UniProtKB-ARBA"/>
</dbReference>
<dbReference type="GO" id="GO:0050531">
    <property type="term" value="F:mannosyl-3-phosphoglycerate phosphatase activity"/>
    <property type="evidence" value="ECO:0007669"/>
    <property type="project" value="UniProtKB-UniRule"/>
</dbReference>
<dbReference type="GO" id="GO:0051479">
    <property type="term" value="P:mannosylglycerate biosynthetic process"/>
    <property type="evidence" value="ECO:0007669"/>
    <property type="project" value="InterPro"/>
</dbReference>
<dbReference type="CDD" id="cd07507">
    <property type="entry name" value="HAD_Pase"/>
    <property type="match status" value="1"/>
</dbReference>
<dbReference type="Gene3D" id="3.40.50.1000">
    <property type="entry name" value="HAD superfamily/HAD-like"/>
    <property type="match status" value="1"/>
</dbReference>
<dbReference type="Gene3D" id="3.30.980.20">
    <property type="entry name" value="Putative mannosyl-3-phosphoglycerate phosphatase, domain 2"/>
    <property type="match status" value="1"/>
</dbReference>
<dbReference type="HAMAP" id="MF_00617">
    <property type="entry name" value="MPGP_rel"/>
    <property type="match status" value="1"/>
</dbReference>
<dbReference type="InterPro" id="IPR036412">
    <property type="entry name" value="HAD-like_sf"/>
</dbReference>
<dbReference type="InterPro" id="IPR006381">
    <property type="entry name" value="HAD-SF-IIB-MPGP"/>
</dbReference>
<dbReference type="InterPro" id="IPR006379">
    <property type="entry name" value="HAD-SF_hydro_IIB"/>
</dbReference>
<dbReference type="InterPro" id="IPR023214">
    <property type="entry name" value="HAD_sf"/>
</dbReference>
<dbReference type="InterPro" id="IPR012815">
    <property type="entry name" value="MPG_Pase"/>
</dbReference>
<dbReference type="NCBIfam" id="TIGR01484">
    <property type="entry name" value="HAD-SF-IIB"/>
    <property type="match status" value="1"/>
</dbReference>
<dbReference type="NCBIfam" id="TIGR01486">
    <property type="entry name" value="HAD-SF-IIB-MPGP"/>
    <property type="match status" value="1"/>
</dbReference>
<dbReference type="NCBIfam" id="TIGR02463">
    <property type="entry name" value="MPGP_rel"/>
    <property type="match status" value="1"/>
</dbReference>
<dbReference type="NCBIfam" id="NF002976">
    <property type="entry name" value="PRK03669.1"/>
    <property type="match status" value="1"/>
</dbReference>
<dbReference type="PANTHER" id="PTHR10000:SF8">
    <property type="entry name" value="HAD SUPERFAMILY HYDROLASE-LIKE, TYPE 3"/>
    <property type="match status" value="1"/>
</dbReference>
<dbReference type="PANTHER" id="PTHR10000">
    <property type="entry name" value="PHOSPHOSERINE PHOSPHATASE"/>
    <property type="match status" value="1"/>
</dbReference>
<dbReference type="Pfam" id="PF08282">
    <property type="entry name" value="Hydrolase_3"/>
    <property type="match status" value="1"/>
</dbReference>
<dbReference type="SFLD" id="SFLDG01142">
    <property type="entry name" value="C2.B.2:_Mannosyl-3-phosphoglyc"/>
    <property type="match status" value="1"/>
</dbReference>
<dbReference type="SFLD" id="SFLDS00003">
    <property type="entry name" value="Haloacid_Dehalogenase"/>
    <property type="match status" value="1"/>
</dbReference>
<dbReference type="SUPFAM" id="SSF56784">
    <property type="entry name" value="HAD-like"/>
    <property type="match status" value="1"/>
</dbReference>
<keyword id="KW-0963">Cytoplasm</keyword>
<keyword id="KW-0378">Hydrolase</keyword>
<keyword id="KW-0460">Magnesium</keyword>
<keyword id="KW-0479">Metal-binding</keyword>
<comment type="catalytic activity">
    <reaction evidence="1">
        <text>2-O-(alpha-D-mannosyl)-3-phosphoglycerate + H2O = (2R)-2-O-(alpha-D-mannosyl)-glycerate + phosphate</text>
        <dbReference type="Rhea" id="RHEA:19309"/>
        <dbReference type="ChEBI" id="CHEBI:15377"/>
        <dbReference type="ChEBI" id="CHEBI:43474"/>
        <dbReference type="ChEBI" id="CHEBI:57541"/>
        <dbReference type="ChEBI" id="CHEBI:57744"/>
        <dbReference type="EC" id="3.1.3.70"/>
    </reaction>
</comment>
<comment type="cofactor">
    <cofactor evidence="1">
        <name>Mg(2+)</name>
        <dbReference type="ChEBI" id="CHEBI:18420"/>
    </cofactor>
</comment>
<comment type="subcellular location">
    <subcellularLocation>
        <location evidence="1">Cytoplasm</location>
    </subcellularLocation>
</comment>
<comment type="similarity">
    <text evidence="1">Belongs to the HAD-like hydrolase superfamily. MPGP family.</text>
</comment>
<name>MPGP_ECO5E</name>
<gene>
    <name type="ordered locus">ECH74115_2733</name>
</gene>
<organism>
    <name type="scientific">Escherichia coli O157:H7 (strain EC4115 / EHEC)</name>
    <dbReference type="NCBI Taxonomy" id="444450"/>
    <lineage>
        <taxon>Bacteria</taxon>
        <taxon>Pseudomonadati</taxon>
        <taxon>Pseudomonadota</taxon>
        <taxon>Gammaproteobacteria</taxon>
        <taxon>Enterobacterales</taxon>
        <taxon>Enterobacteriaceae</taxon>
        <taxon>Escherichia</taxon>
    </lineage>
</organism>
<protein>
    <recommendedName>
        <fullName evidence="1">Mannosyl-3-phosphoglycerate phosphatase</fullName>
        <shortName evidence="1">MPGP</shortName>
        <ecNumber evidence="1">3.1.3.70</ecNumber>
    </recommendedName>
</protein>
<proteinExistence type="inferred from homology"/>
<feature type="chain" id="PRO_1000130431" description="Mannosyl-3-phosphoglycerate phosphatase">
    <location>
        <begin position="1"/>
        <end position="271"/>
    </location>
</feature>
<feature type="active site" description="Nucleophile" evidence="1">
    <location>
        <position position="13"/>
    </location>
</feature>
<feature type="binding site" evidence="1">
    <location>
        <position position="13"/>
    </location>
    <ligand>
        <name>Mg(2+)</name>
        <dbReference type="ChEBI" id="CHEBI:18420"/>
    </ligand>
</feature>
<feature type="binding site" evidence="1">
    <location>
        <position position="15"/>
    </location>
    <ligand>
        <name>Mg(2+)</name>
        <dbReference type="ChEBI" id="CHEBI:18420"/>
    </ligand>
</feature>
<feature type="binding site" evidence="1">
    <location>
        <position position="214"/>
    </location>
    <ligand>
        <name>Mg(2+)</name>
        <dbReference type="ChEBI" id="CHEBI:18420"/>
    </ligand>
</feature>